<comment type="function">
    <text evidence="1">Multifunctional protein that plays a role in silencing host antiviral defenses and promoting viral transcription. Does not seem to be essential for HBV infection. May be directly involved in development of cirrhosis and liver cancer (hepatocellular carcinoma). Most of cytosolic activities involve modulation of cytosolic calcium. The effect on apoptosis is controversial depending on the cell types in which the studies have been conducted. May induce apoptosis by localizing in mitochondria and causing loss of mitochondrial membrane potential. May also modulate apoptosis by binding host CFLAR, a key regulator of the death-inducing signaling complex (DISC). Promotes viral transcription by using the host E3 ubiquitin ligase DDB1 to target the SMC5-SMC6 complex to proteasomal degradation. This host complex would otherwise bind to viral episomal DNA, and prevents its transcription. Moderately stimulates transcription of many different viral and cellular transcription elements. Promoters and enhancers stimulated by HBx contain DNA binding sites for NF-kappa-B, AP-1, AP-2, c-EBP, ATF/CREB, or the calcium-activated factor NF-AT.</text>
</comment>
<comment type="subunit">
    <text evidence="1">May form homodimer. May interact with host CEBPA, CFLAR, CREB1, DDB1, E4F1, HBXIP, HSPD1/HSP60, NFKBIA, POLR2E and SMAD4. Interacts with host SMC5-SMC6 complex and induces its degradation. Interacts with host TRPC4AP; leading to prevent ubiquitination of TRPC4AP. Interacts with host PLSCR1; this interaction promotes ubiquitination and degradation of HBx and impairs HBx-mediated cell proliferation.</text>
</comment>
<comment type="subcellular location">
    <subcellularLocation>
        <location evidence="1">Host cytoplasm</location>
    </subcellularLocation>
    <subcellularLocation>
        <location evidence="1">Host nucleus</location>
    </subcellularLocation>
    <subcellularLocation>
        <location evidence="1">Host mitochondrion</location>
    </subcellularLocation>
    <text evidence="1">Mainly cytoplasmic as only a fraction is detected in the nucleus. In cytoplasm, a minor fraction associates with mitochondria or proteasomes.</text>
</comment>
<comment type="PTM">
    <text evidence="1">A fraction may be phosphorylated in insect cells and HepG2 cells, a human hepatoblastoma cell line. Phosphorylated in vitro by host protein kinase C or mitogen-activated protein kinase. N-acetylated in insect cells.</text>
</comment>
<comment type="similarity">
    <text evidence="1">Belongs to the orthohepadnavirus protein X family.</text>
</comment>
<organism>
    <name type="scientific">Orangutan hepatitis B virus (isolate Somad)</name>
    <name type="common">HBVoru</name>
    <dbReference type="NCBI Taxonomy" id="489545"/>
    <lineage>
        <taxon>Viruses</taxon>
        <taxon>Riboviria</taxon>
        <taxon>Pararnavirae</taxon>
        <taxon>Artverviricota</taxon>
        <taxon>Revtraviricetes</taxon>
        <taxon>Blubervirales</taxon>
        <taxon>Hepadnaviridae</taxon>
        <taxon>Orthohepadnavirus</taxon>
        <taxon>Hepatitis B virus</taxon>
    </lineage>
</organism>
<gene>
    <name evidence="1" type="primary">X</name>
</gene>
<evidence type="ECO:0000255" key="1">
    <source>
        <dbReference type="HAMAP-Rule" id="MF_04074"/>
    </source>
</evidence>
<proteinExistence type="inferred from homology"/>
<protein>
    <recommendedName>
        <fullName evidence="1">Protein X</fullName>
    </recommendedName>
    <alternativeName>
        <fullName evidence="1">HBx</fullName>
    </alternativeName>
    <alternativeName>
        <fullName evidence="1">Peptide X</fullName>
    </alternativeName>
    <alternativeName>
        <fullName evidence="1">pX</fullName>
    </alternativeName>
</protein>
<sequence>MAARLCCQLDTARDVLCLRPVGAESRGRPFSGSVGALPPSSPPAVPADHGAHLSLRGLPVCAFSSAGPCALRFTSARCMETTVNAPRNLPKVLHKRTLGLSTMSTTGIETYFKDCVFKDWEELGEEIRLKVFVLGGCRHKLVCSPAPCNFFTSA</sequence>
<dbReference type="EMBL" id="AF193863">
    <property type="protein sequence ID" value="AAF33118.1"/>
    <property type="molecule type" value="Genomic_DNA"/>
</dbReference>
<dbReference type="SMR" id="Q9J5S3"/>
<dbReference type="Proteomes" id="UP000001183">
    <property type="component" value="Genome"/>
</dbReference>
<dbReference type="GO" id="GO:0033650">
    <property type="term" value="C:host cell mitochondrion"/>
    <property type="evidence" value="ECO:0007669"/>
    <property type="project" value="UniProtKB-SubCell"/>
</dbReference>
<dbReference type="GO" id="GO:0042025">
    <property type="term" value="C:host cell nucleus"/>
    <property type="evidence" value="ECO:0007669"/>
    <property type="project" value="UniProtKB-SubCell"/>
</dbReference>
<dbReference type="GO" id="GO:0006351">
    <property type="term" value="P:DNA-templated transcription"/>
    <property type="evidence" value="ECO:0007669"/>
    <property type="project" value="UniProtKB-UniRule"/>
</dbReference>
<dbReference type="GO" id="GO:0085033">
    <property type="term" value="P:symbiont-mediated activation of host NF-kappaB cascade"/>
    <property type="evidence" value="ECO:0007669"/>
    <property type="project" value="UniProtKB-UniRule"/>
</dbReference>
<dbReference type="GO" id="GO:0039592">
    <property type="term" value="P:symbiont-mediated arrest of host cell cycle during G2/M transition"/>
    <property type="evidence" value="ECO:0007669"/>
    <property type="project" value="UniProtKB-UniRule"/>
</dbReference>
<dbReference type="GO" id="GO:0019079">
    <property type="term" value="P:viral genome replication"/>
    <property type="evidence" value="ECO:0007669"/>
    <property type="project" value="UniProtKB-UniRule"/>
</dbReference>
<dbReference type="HAMAP" id="MF_04074">
    <property type="entry name" value="HBV_X"/>
    <property type="match status" value="1"/>
</dbReference>
<dbReference type="InterPro" id="IPR000236">
    <property type="entry name" value="Transactivation_prot_X"/>
</dbReference>
<dbReference type="Pfam" id="PF00739">
    <property type="entry name" value="X"/>
    <property type="match status" value="1"/>
</dbReference>
<keyword id="KW-1074">Activation of host NF-kappa-B by virus</keyword>
<keyword id="KW-0010">Activator</keyword>
<keyword id="KW-0053">Apoptosis</keyword>
<keyword id="KW-1035">Host cytoplasm</keyword>
<keyword id="KW-1079">Host G2/M cell cycle arrest by virus</keyword>
<keyword id="KW-1045">Host mitochondrion</keyword>
<keyword id="KW-1048">Host nucleus</keyword>
<keyword id="KW-0945">Host-virus interaction</keyword>
<keyword id="KW-1121">Modulation of host cell cycle by virus</keyword>
<keyword id="KW-0804">Transcription</keyword>
<keyword id="KW-0805">Transcription regulation</keyword>
<name>X_HBVOR</name>
<feature type="chain" id="PRO_0000322113" description="Protein X">
    <location>
        <begin position="1"/>
        <end position="154"/>
    </location>
</feature>
<feature type="region of interest" description="Mitochondrial targeting sequence" evidence="1">
    <location>
        <begin position="68"/>
        <end position="117"/>
    </location>
</feature>
<reference key="1">
    <citation type="journal article" date="2001" name="J. Gen. Virol.">
        <title>Analysis of two genomic variants of orang-utan hepadnavirus and their relationship to other primate hepatitis B-like viruses.</title>
        <authorList>
            <person name="Verschoor E.J."/>
            <person name="Warren K.S."/>
            <person name="Langenhuijzen S."/>
            <person name="Heriyanto X."/>
            <person name="Swan R.A."/>
            <person name="Heeney J.L."/>
        </authorList>
    </citation>
    <scope>NUCLEOTIDE SEQUENCE [GENOMIC DNA]</scope>
</reference>
<organismHost>
    <name type="scientific">Pongo pygmaeus</name>
    <name type="common">Bornean orangutan</name>
    <dbReference type="NCBI Taxonomy" id="9600"/>
</organismHost>
<accession>Q9J5S3</accession>